<comment type="function">
    <text evidence="1">Catalyzes the attachment of isoleucine to tRNA(Ile). As IleRS can inadvertently accommodate and process structurally similar amino acids such as valine, to avoid such errors it has two additional distinct tRNA(Ile)-dependent editing activities. One activity is designated as 'pretransfer' editing and involves the hydrolysis of activated Val-AMP. The other activity is designated 'posttransfer' editing and involves deacylation of mischarged Val-tRNA(Ile).</text>
</comment>
<comment type="catalytic activity">
    <reaction evidence="1">
        <text>tRNA(Ile) + L-isoleucine + ATP = L-isoleucyl-tRNA(Ile) + AMP + diphosphate</text>
        <dbReference type="Rhea" id="RHEA:11060"/>
        <dbReference type="Rhea" id="RHEA-COMP:9666"/>
        <dbReference type="Rhea" id="RHEA-COMP:9695"/>
        <dbReference type="ChEBI" id="CHEBI:30616"/>
        <dbReference type="ChEBI" id="CHEBI:33019"/>
        <dbReference type="ChEBI" id="CHEBI:58045"/>
        <dbReference type="ChEBI" id="CHEBI:78442"/>
        <dbReference type="ChEBI" id="CHEBI:78528"/>
        <dbReference type="ChEBI" id="CHEBI:456215"/>
        <dbReference type="EC" id="6.1.1.5"/>
    </reaction>
</comment>
<comment type="cofactor">
    <cofactor evidence="1">
        <name>Zn(2+)</name>
        <dbReference type="ChEBI" id="CHEBI:29105"/>
    </cofactor>
    <text evidence="1">Binds 1 zinc ion per subunit.</text>
</comment>
<comment type="subunit">
    <text evidence="1">Monomer.</text>
</comment>
<comment type="subcellular location">
    <subcellularLocation>
        <location evidence="1">Cytoplasm</location>
    </subcellularLocation>
</comment>
<comment type="domain">
    <text evidence="1">IleRS has two distinct active sites: one for aminoacylation and one for editing. The misactivated valine is translocated from the active site to the editing site, which sterically excludes the correctly activated isoleucine. The single editing site contains two valyl binding pockets, one specific for each substrate (Val-AMP or Val-tRNA(Ile)).</text>
</comment>
<comment type="similarity">
    <text evidence="1">Belongs to the class-I aminoacyl-tRNA synthetase family. IleS type 1 subfamily.</text>
</comment>
<keyword id="KW-0030">Aminoacyl-tRNA synthetase</keyword>
<keyword id="KW-0067">ATP-binding</keyword>
<keyword id="KW-0963">Cytoplasm</keyword>
<keyword id="KW-0436">Ligase</keyword>
<keyword id="KW-0479">Metal-binding</keyword>
<keyword id="KW-0547">Nucleotide-binding</keyword>
<keyword id="KW-0648">Protein biosynthesis</keyword>
<keyword id="KW-1185">Reference proteome</keyword>
<keyword id="KW-0862">Zinc</keyword>
<evidence type="ECO:0000255" key="1">
    <source>
        <dbReference type="HAMAP-Rule" id="MF_02002"/>
    </source>
</evidence>
<gene>
    <name evidence="1" type="primary">ileS</name>
    <name type="ordered locus">SSA_0661</name>
</gene>
<dbReference type="EC" id="6.1.1.5" evidence="1"/>
<dbReference type="EMBL" id="CP000387">
    <property type="protein sequence ID" value="ABN44099.1"/>
    <property type="molecule type" value="Genomic_DNA"/>
</dbReference>
<dbReference type="RefSeq" id="WP_011836649.1">
    <property type="nucleotide sequence ID" value="NC_009009.1"/>
</dbReference>
<dbReference type="RefSeq" id="YP_001034649.1">
    <property type="nucleotide sequence ID" value="NC_009009.1"/>
</dbReference>
<dbReference type="SMR" id="A3CLP4"/>
<dbReference type="STRING" id="388919.SSA_0661"/>
<dbReference type="KEGG" id="ssa:SSA_0661"/>
<dbReference type="PATRIC" id="fig|388919.9.peg.637"/>
<dbReference type="eggNOG" id="COG0060">
    <property type="taxonomic scope" value="Bacteria"/>
</dbReference>
<dbReference type="HOGENOM" id="CLU_001493_7_1_9"/>
<dbReference type="OrthoDB" id="9810365at2"/>
<dbReference type="Proteomes" id="UP000002148">
    <property type="component" value="Chromosome"/>
</dbReference>
<dbReference type="GO" id="GO:0005829">
    <property type="term" value="C:cytosol"/>
    <property type="evidence" value="ECO:0007669"/>
    <property type="project" value="TreeGrafter"/>
</dbReference>
<dbReference type="GO" id="GO:0002161">
    <property type="term" value="F:aminoacyl-tRNA deacylase activity"/>
    <property type="evidence" value="ECO:0007669"/>
    <property type="project" value="InterPro"/>
</dbReference>
<dbReference type="GO" id="GO:0005524">
    <property type="term" value="F:ATP binding"/>
    <property type="evidence" value="ECO:0007669"/>
    <property type="project" value="UniProtKB-UniRule"/>
</dbReference>
<dbReference type="GO" id="GO:0004822">
    <property type="term" value="F:isoleucine-tRNA ligase activity"/>
    <property type="evidence" value="ECO:0007669"/>
    <property type="project" value="UniProtKB-UniRule"/>
</dbReference>
<dbReference type="GO" id="GO:0000049">
    <property type="term" value="F:tRNA binding"/>
    <property type="evidence" value="ECO:0007669"/>
    <property type="project" value="InterPro"/>
</dbReference>
<dbReference type="GO" id="GO:0008270">
    <property type="term" value="F:zinc ion binding"/>
    <property type="evidence" value="ECO:0007669"/>
    <property type="project" value="UniProtKB-UniRule"/>
</dbReference>
<dbReference type="GO" id="GO:0006428">
    <property type="term" value="P:isoleucyl-tRNA aminoacylation"/>
    <property type="evidence" value="ECO:0007669"/>
    <property type="project" value="UniProtKB-UniRule"/>
</dbReference>
<dbReference type="CDD" id="cd07960">
    <property type="entry name" value="Anticodon_Ia_Ile_BEm"/>
    <property type="match status" value="1"/>
</dbReference>
<dbReference type="CDD" id="cd00818">
    <property type="entry name" value="IleRS_core"/>
    <property type="match status" value="1"/>
</dbReference>
<dbReference type="FunFam" id="1.10.10.830:FF:000001">
    <property type="entry name" value="Isoleucine--tRNA ligase"/>
    <property type="match status" value="1"/>
</dbReference>
<dbReference type="FunFam" id="1.10.730.20:FF:000001">
    <property type="entry name" value="Isoleucine--tRNA ligase"/>
    <property type="match status" value="1"/>
</dbReference>
<dbReference type="FunFam" id="3.40.50.620:FF:000092">
    <property type="entry name" value="Isoleucine--tRNA ligase"/>
    <property type="match status" value="1"/>
</dbReference>
<dbReference type="FunFam" id="3.90.740.10:FF:000006">
    <property type="entry name" value="Isoleucine--tRNA ligase"/>
    <property type="match status" value="1"/>
</dbReference>
<dbReference type="Gene3D" id="1.10.730.20">
    <property type="match status" value="1"/>
</dbReference>
<dbReference type="Gene3D" id="3.40.50.620">
    <property type="entry name" value="HUPs"/>
    <property type="match status" value="2"/>
</dbReference>
<dbReference type="Gene3D" id="1.10.10.830">
    <property type="entry name" value="Ile-tRNA synthetase CP2 domain-like"/>
    <property type="match status" value="1"/>
</dbReference>
<dbReference type="HAMAP" id="MF_02002">
    <property type="entry name" value="Ile_tRNA_synth_type1"/>
    <property type="match status" value="1"/>
</dbReference>
<dbReference type="InterPro" id="IPR001412">
    <property type="entry name" value="aa-tRNA-synth_I_CS"/>
</dbReference>
<dbReference type="InterPro" id="IPR002300">
    <property type="entry name" value="aa-tRNA-synth_Ia"/>
</dbReference>
<dbReference type="InterPro" id="IPR033708">
    <property type="entry name" value="Anticodon_Ile_BEm"/>
</dbReference>
<dbReference type="InterPro" id="IPR002301">
    <property type="entry name" value="Ile-tRNA-ligase"/>
</dbReference>
<dbReference type="InterPro" id="IPR023585">
    <property type="entry name" value="Ile-tRNA-ligase_type1"/>
</dbReference>
<dbReference type="InterPro" id="IPR050081">
    <property type="entry name" value="Ile-tRNA_ligase"/>
</dbReference>
<dbReference type="InterPro" id="IPR013155">
    <property type="entry name" value="M/V/L/I-tRNA-synth_anticd-bd"/>
</dbReference>
<dbReference type="InterPro" id="IPR014729">
    <property type="entry name" value="Rossmann-like_a/b/a_fold"/>
</dbReference>
<dbReference type="InterPro" id="IPR009080">
    <property type="entry name" value="tRNAsynth_Ia_anticodon-bd"/>
</dbReference>
<dbReference type="InterPro" id="IPR009008">
    <property type="entry name" value="Val/Leu/Ile-tRNA-synth_edit"/>
</dbReference>
<dbReference type="NCBIfam" id="TIGR00392">
    <property type="entry name" value="ileS"/>
    <property type="match status" value="1"/>
</dbReference>
<dbReference type="PANTHER" id="PTHR42765:SF1">
    <property type="entry name" value="ISOLEUCINE--TRNA LIGASE, MITOCHONDRIAL"/>
    <property type="match status" value="1"/>
</dbReference>
<dbReference type="PANTHER" id="PTHR42765">
    <property type="entry name" value="SOLEUCYL-TRNA SYNTHETASE"/>
    <property type="match status" value="1"/>
</dbReference>
<dbReference type="Pfam" id="PF08264">
    <property type="entry name" value="Anticodon_1"/>
    <property type="match status" value="1"/>
</dbReference>
<dbReference type="Pfam" id="PF00133">
    <property type="entry name" value="tRNA-synt_1"/>
    <property type="match status" value="1"/>
</dbReference>
<dbReference type="PRINTS" id="PR00984">
    <property type="entry name" value="TRNASYNTHILE"/>
</dbReference>
<dbReference type="SUPFAM" id="SSF47323">
    <property type="entry name" value="Anticodon-binding domain of a subclass of class I aminoacyl-tRNA synthetases"/>
    <property type="match status" value="1"/>
</dbReference>
<dbReference type="SUPFAM" id="SSF52374">
    <property type="entry name" value="Nucleotidylyl transferase"/>
    <property type="match status" value="1"/>
</dbReference>
<dbReference type="SUPFAM" id="SSF50677">
    <property type="entry name" value="ValRS/IleRS/LeuRS editing domain"/>
    <property type="match status" value="1"/>
</dbReference>
<dbReference type="PROSITE" id="PS00178">
    <property type="entry name" value="AA_TRNA_LIGASE_I"/>
    <property type="match status" value="1"/>
</dbReference>
<protein>
    <recommendedName>
        <fullName evidence="1">Isoleucine--tRNA ligase</fullName>
        <ecNumber evidence="1">6.1.1.5</ecNumber>
    </recommendedName>
    <alternativeName>
        <fullName evidence="1">Isoleucyl-tRNA synthetase</fullName>
        <shortName evidence="1">IleRS</shortName>
    </alternativeName>
</protein>
<proteinExistence type="inferred from homology"/>
<feature type="chain" id="PRO_1000022132" description="Isoleucine--tRNA ligase">
    <location>
        <begin position="1"/>
        <end position="930"/>
    </location>
</feature>
<feature type="short sequence motif" description="'HIGH' region">
    <location>
        <begin position="57"/>
        <end position="67"/>
    </location>
</feature>
<feature type="short sequence motif" description="'KMSKS' region">
    <location>
        <begin position="595"/>
        <end position="599"/>
    </location>
</feature>
<feature type="binding site" evidence="1">
    <location>
        <position position="554"/>
    </location>
    <ligand>
        <name>L-isoleucyl-5'-AMP</name>
        <dbReference type="ChEBI" id="CHEBI:178002"/>
    </ligand>
</feature>
<feature type="binding site" evidence="1">
    <location>
        <position position="598"/>
    </location>
    <ligand>
        <name>ATP</name>
        <dbReference type="ChEBI" id="CHEBI:30616"/>
    </ligand>
</feature>
<feature type="binding site" evidence="1">
    <location>
        <position position="888"/>
    </location>
    <ligand>
        <name>Zn(2+)</name>
        <dbReference type="ChEBI" id="CHEBI:29105"/>
    </ligand>
</feature>
<feature type="binding site" evidence="1">
    <location>
        <position position="891"/>
    </location>
    <ligand>
        <name>Zn(2+)</name>
        <dbReference type="ChEBI" id="CHEBI:29105"/>
    </ligand>
</feature>
<feature type="binding site" evidence="1">
    <location>
        <position position="908"/>
    </location>
    <ligand>
        <name>Zn(2+)</name>
        <dbReference type="ChEBI" id="CHEBI:29105"/>
    </ligand>
</feature>
<feature type="binding site" evidence="1">
    <location>
        <position position="911"/>
    </location>
    <ligand>
        <name>Zn(2+)</name>
        <dbReference type="ChEBI" id="CHEBI:29105"/>
    </ligand>
</feature>
<accession>A3CLP4</accession>
<sequence length="930" mass="105550">MKLKETLNLGKTAFPMRAGLPNKEPIWQKEWDQAKLYQRRQELNEGKPHFILHDGPPYANGNIHVGHAMNKISKDIIVRSKSMAGYYAPYIPGWDTHGLPIEQVLAKQGVKRKELDLVEYLNMCRDYALSQVEKQKEDFKRLGVSGDWENPYVTLTPDYEAAQIRVFGEMAKKGYIYRGAKPVYWSWSSESALAEAEIEYHDLVSTSLYYANRVKDGKGVLDTDTYIVVWTTTPFTITASRGLTVGADIDYVVVQPAGESRKFVVASELLNSLSEKFGWADVQVLATYRGQELNHIVTVHPWDTAVDELVILGDHVTTDSGTGIVHTAPGFGEDDYNVGVANDLEVFVTVNERGIMMENAGPDFAGQFYDKVAPTVIEKLGDLLLAQEEISHSYPFDWRTKKPIIWRAVPQWFASVSKFRQEILDEIEKVKFHSEWGKVRLYNMIRDRGDWVISRQRAWGVPLPIFYAEDGTPIMTAETIEHVAQLFEEHGSIVWWKREAKDLLPEGFTHPGSPNGEFTKETDIMDVWFDSGSSWNGVVVNRPELTYPADLYLEGSDQYRGWFNSSLITSVANHGVAPYKQILSQGFALDGKGEKMSKSLGNTIAPSDVEKQFGAEILRLWVTSVDSSNDVRISMDILSQVSETYRKIRNTLRFLIANTSDFNPVEDAVAYEELRSVDKYMTIRFNQLVETIRKAYADFEFLTIYKAIVNFVTVDLSAFYLDFAKDIVYIEAAKSLERRQMQTVFYDVLVKITKLLTPILPHTAEEIWSYLEHEEEEFVQLSELPEAQTFPNQEEILDTWSAFMDFRSQAQKALEEARNEKVIGKSLEAHLTVYPNEVIKTLLEAVNSDVAQLLIVSQLTIAEGPAPEGALVFEDVAFVVEHAQGQVCDRCRRIDTTVQERSYQALVCDHCAEILEENFAQAVSEGFEAN</sequence>
<name>SYI_STRSV</name>
<reference key="1">
    <citation type="journal article" date="2007" name="J. Bacteriol.">
        <title>Genome of the opportunistic pathogen Streptococcus sanguinis.</title>
        <authorList>
            <person name="Xu P."/>
            <person name="Alves J.M."/>
            <person name="Kitten T."/>
            <person name="Brown A."/>
            <person name="Chen Z."/>
            <person name="Ozaki L.S."/>
            <person name="Manque P."/>
            <person name="Ge X."/>
            <person name="Serrano M.G."/>
            <person name="Puiu D."/>
            <person name="Hendricks S."/>
            <person name="Wang Y."/>
            <person name="Chaplin M.D."/>
            <person name="Akan D."/>
            <person name="Paik S."/>
            <person name="Peterson D.L."/>
            <person name="Macrina F.L."/>
            <person name="Buck G.A."/>
        </authorList>
    </citation>
    <scope>NUCLEOTIDE SEQUENCE [LARGE SCALE GENOMIC DNA]</scope>
    <source>
        <strain>SK36</strain>
    </source>
</reference>
<organism>
    <name type="scientific">Streptococcus sanguinis (strain SK36)</name>
    <dbReference type="NCBI Taxonomy" id="388919"/>
    <lineage>
        <taxon>Bacteria</taxon>
        <taxon>Bacillati</taxon>
        <taxon>Bacillota</taxon>
        <taxon>Bacilli</taxon>
        <taxon>Lactobacillales</taxon>
        <taxon>Streptococcaceae</taxon>
        <taxon>Streptococcus</taxon>
    </lineage>
</organism>